<organism>
    <name type="scientific">Acidianus ambivalens</name>
    <name type="common">Desulfurolobus ambivalens</name>
    <dbReference type="NCBI Taxonomy" id="2283"/>
    <lineage>
        <taxon>Archaea</taxon>
        <taxon>Thermoproteota</taxon>
        <taxon>Thermoprotei</taxon>
        <taxon>Sulfolobales</taxon>
        <taxon>Sulfolobaceae</taxon>
        <taxon>Acidianus</taxon>
    </lineage>
</organism>
<gene>
    <name type="primary">bps2</name>
</gene>
<sequence length="582" mass="68164">MKVRVYNIGGIVSPLEVELTKGVNIYKAPNAYGKTSLAKALVSLLTSAIKPDDLLNVFANSGYVELDLDGRTYYRRIKRVKNKIMESSKLLLDDDRALLLSYFSPENKLLNQIMSGEENVEWFISATSKINELKSKKEEMETKLHNLQAEIDDLNRKHKEAIELQTKIKQIEDEIARLEKEKESDKVLNKTTQTISITNENKLRDIKEKIEVKKRELEDLQNRIARLDQEIKNKESLASPEIRQSYERQLQEINAQLQKITAQRNEAEIEIRLLEKVLDQIRESEKQHLTTCYVCGSHVDPSIWKVRIDVISKELQEKNSLYAGIKKEADELLSKKSEIEKKLKELDQISSEISKLKMSRSELENRIESVKSTIDDLERQRREMEERFNRNAEIYRVYDINDSINKRIEELKKKKDEYEYELAINGIPSTILNKISEKQKELQEVQKMVDDLEKEYMRRLTIAREEFVKIANYLLKELEFDLRAEIDENDRLVVKRNDATLELRKLSSSERTTLALILVLTALKSYFKTPFFIVDESFMTFDQRRFDKIVKYLNSITDYVIITKSDENIELLKETMEPLASS</sequence>
<dbReference type="EMBL" id="X64202">
    <property type="protein sequence ID" value="CAA45528.1"/>
    <property type="molecule type" value="Genomic_DNA"/>
</dbReference>
<dbReference type="PIR" id="S22195">
    <property type="entry name" value="S22195"/>
</dbReference>
<dbReference type="RefSeq" id="WP_152941813.1">
    <property type="nucleotide sequence ID" value="NZ_CP045482.1"/>
</dbReference>
<dbReference type="SMR" id="P32985"/>
<dbReference type="GeneID" id="42779391"/>
<dbReference type="GO" id="GO:0005524">
    <property type="term" value="F:ATP binding"/>
    <property type="evidence" value="ECO:0007669"/>
    <property type="project" value="UniProtKB-KW"/>
</dbReference>
<dbReference type="GO" id="GO:0046872">
    <property type="term" value="F:metal ion binding"/>
    <property type="evidence" value="ECO:0007669"/>
    <property type="project" value="UniProtKB-KW"/>
</dbReference>
<dbReference type="Gene3D" id="1.10.287.510">
    <property type="entry name" value="Helix hairpin bin"/>
    <property type="match status" value="1"/>
</dbReference>
<dbReference type="Gene3D" id="3.40.50.300">
    <property type="entry name" value="P-loop containing nucleotide triphosphate hydrolases"/>
    <property type="match status" value="2"/>
</dbReference>
<dbReference type="InterPro" id="IPR027417">
    <property type="entry name" value="P-loop_NTPase"/>
</dbReference>
<dbReference type="InterPro" id="IPR013134">
    <property type="entry name" value="Zn_hook_RAD50"/>
</dbReference>
<dbReference type="NCBIfam" id="NF045487">
    <property type="entry name" value="ASRP"/>
    <property type="match status" value="1"/>
</dbReference>
<dbReference type="PANTHER" id="PTHR32114">
    <property type="entry name" value="ABC TRANSPORTER ABCH.3"/>
    <property type="match status" value="1"/>
</dbReference>
<dbReference type="PANTHER" id="PTHR32114:SF2">
    <property type="entry name" value="ABC TRANSPORTER ABCH.3"/>
    <property type="match status" value="1"/>
</dbReference>
<dbReference type="SUPFAM" id="SSF52540">
    <property type="entry name" value="P-loop containing nucleoside triphosphate hydrolases"/>
    <property type="match status" value="2"/>
</dbReference>
<dbReference type="PROSITE" id="PS51131">
    <property type="entry name" value="ZN_HOOK"/>
    <property type="match status" value="1"/>
</dbReference>
<protein>
    <recommendedName>
        <fullName>Protein bps2</fullName>
    </recommendedName>
</protein>
<evidence type="ECO:0000255" key="1"/>
<evidence type="ECO:0000255" key="2">
    <source>
        <dbReference type="PROSITE-ProRule" id="PRU00471"/>
    </source>
</evidence>
<feature type="chain" id="PRO_0000138671" description="Protein bps2">
    <location>
        <begin position="1"/>
        <end position="582"/>
    </location>
</feature>
<feature type="domain" description="Zinc-hook" evidence="2">
    <location>
        <begin position="243"/>
        <end position="351"/>
    </location>
</feature>
<feature type="coiled-coil region" evidence="1">
    <location>
        <begin position="243"/>
        <end position="281"/>
    </location>
</feature>
<feature type="coiled-coil region" evidence="1">
    <location>
        <begin position="320"/>
        <end position="351"/>
    </location>
</feature>
<feature type="binding site" evidence="1">
    <location>
        <begin position="28"/>
        <end position="35"/>
    </location>
    <ligand>
        <name>ATP</name>
        <dbReference type="ChEBI" id="CHEBI:30616"/>
    </ligand>
</feature>
<feature type="binding site" evidence="2">
    <location>
        <position position="292"/>
    </location>
    <ligand>
        <name>Zn(2+)</name>
        <dbReference type="ChEBI" id="CHEBI:29105"/>
    </ligand>
</feature>
<feature type="binding site" evidence="2">
    <location>
        <position position="295"/>
    </location>
    <ligand>
        <name>Zn(2+)</name>
        <dbReference type="ChEBI" id="CHEBI:29105"/>
    </ligand>
</feature>
<name>BPS2_ACIAM</name>
<proteinExistence type="predicted"/>
<reference key="1">
    <citation type="submission" date="1992-01" db="EMBL/GenBank/DDBJ databases">
        <authorList>
            <person name="Kletzin A."/>
        </authorList>
    </citation>
    <scope>NUCLEOTIDE SEQUENCE [GENOMIC DNA]</scope>
    <source>
        <strain>Lei 10 / DSM 3772 / JCM 9191</strain>
    </source>
</reference>
<keyword id="KW-0067">ATP-binding</keyword>
<keyword id="KW-0175">Coiled coil</keyword>
<keyword id="KW-0479">Metal-binding</keyword>
<keyword id="KW-0547">Nucleotide-binding</keyword>
<keyword id="KW-0862">Zinc</keyword>
<accession>P32985</accession>